<feature type="signal peptide" evidence="2">
    <location>
        <begin position="1"/>
        <end position="21"/>
    </location>
</feature>
<feature type="chain" id="PRO_0000014982" description="Hepatitis A virus cellular receptor 1 homolog">
    <location>
        <begin position="22"/>
        <end position="305"/>
    </location>
</feature>
<feature type="topological domain" description="Extracellular" evidence="2">
    <location>
        <begin position="22"/>
        <end position="237"/>
    </location>
</feature>
<feature type="transmembrane region" description="Helical" evidence="2">
    <location>
        <begin position="238"/>
        <end position="258"/>
    </location>
</feature>
<feature type="topological domain" description="Cytoplasmic" evidence="2">
    <location>
        <begin position="259"/>
        <end position="305"/>
    </location>
</feature>
<feature type="domain" description="Ig-like V-type">
    <location>
        <begin position="22"/>
        <end position="122"/>
    </location>
</feature>
<feature type="region of interest" description="Disordered" evidence="4">
    <location>
        <begin position="129"/>
        <end position="185"/>
    </location>
</feature>
<feature type="compositionally biased region" description="Low complexity" evidence="4">
    <location>
        <begin position="139"/>
        <end position="152"/>
    </location>
</feature>
<feature type="compositionally biased region" description="Low complexity" evidence="4">
    <location>
        <begin position="161"/>
        <end position="177"/>
    </location>
</feature>
<feature type="glycosylation site" description="N-linked (GlcNAc...) asparagine" evidence="2">
    <location>
        <position position="208"/>
    </location>
</feature>
<feature type="disulfide bond" evidence="3 7 16">
    <location>
        <begin position="37"/>
        <end position="108"/>
    </location>
</feature>
<feature type="disulfide bond" evidence="7 16">
    <location>
        <begin position="49"/>
        <end position="60"/>
    </location>
</feature>
<feature type="disulfide bond" evidence="7 16">
    <location>
        <begin position="55"/>
        <end position="107"/>
    </location>
</feature>
<feature type="splice variant" id="VSP_015224" description="In isoform 2." evidence="13 14">
    <location>
        <begin position="183"/>
        <end position="205"/>
    </location>
</feature>
<feature type="sequence variant" description="In strain: HBA.">
    <original>A</original>
    <variation>T</variation>
    <location>
        <position position="18"/>
    </location>
</feature>
<feature type="sequence variant" description="In strain: HBA.">
    <original>T</original>
    <variation>R</variation>
    <location>
        <position position="137"/>
    </location>
</feature>
<feature type="sequence variant" description="In strain: HBA.">
    <original>I</original>
    <variation>T</variation>
    <location>
        <position position="164"/>
    </location>
</feature>
<feature type="sequence variant" description="In strain: HBA.">
    <location>
        <begin position="190"/>
        <end position="204"/>
    </location>
</feature>
<feature type="sequence conflict" description="In Ref. 3; AAH53400." evidence="15" ref="3">
    <original>T</original>
    <variation>A</variation>
    <location>
        <position position="152"/>
    </location>
</feature>
<feature type="strand" evidence="17">
    <location>
        <begin position="23"/>
        <end position="28"/>
    </location>
</feature>
<feature type="strand" evidence="17">
    <location>
        <begin position="33"/>
        <end position="35"/>
    </location>
</feature>
<feature type="strand" evidence="17">
    <location>
        <begin position="48"/>
        <end position="53"/>
    </location>
</feature>
<feature type="strand" evidence="17">
    <location>
        <begin position="57"/>
        <end position="59"/>
    </location>
</feature>
<feature type="strand" evidence="17">
    <location>
        <begin position="63"/>
        <end position="67"/>
    </location>
</feature>
<feature type="strand" evidence="17">
    <location>
        <begin position="69"/>
        <end position="77"/>
    </location>
</feature>
<feature type="helix" evidence="17">
    <location>
        <begin position="86"/>
        <end position="88"/>
    </location>
</feature>
<feature type="strand" evidence="17">
    <location>
        <begin position="93"/>
        <end position="97"/>
    </location>
</feature>
<feature type="helix" evidence="17">
    <location>
        <begin position="100"/>
        <end position="102"/>
    </location>
</feature>
<feature type="strand" evidence="17">
    <location>
        <begin position="104"/>
        <end position="110"/>
    </location>
</feature>
<feature type="strand" evidence="17">
    <location>
        <begin position="119"/>
        <end position="128"/>
    </location>
</feature>
<organism>
    <name type="scientific">Mus musculus</name>
    <name type="common">Mouse</name>
    <dbReference type="NCBI Taxonomy" id="10090"/>
    <lineage>
        <taxon>Eukaryota</taxon>
        <taxon>Metazoa</taxon>
        <taxon>Chordata</taxon>
        <taxon>Craniata</taxon>
        <taxon>Vertebrata</taxon>
        <taxon>Euteleostomi</taxon>
        <taxon>Mammalia</taxon>
        <taxon>Eutheria</taxon>
        <taxon>Euarchontoglires</taxon>
        <taxon>Glires</taxon>
        <taxon>Rodentia</taxon>
        <taxon>Myomorpha</taxon>
        <taxon>Muroidea</taxon>
        <taxon>Muridae</taxon>
        <taxon>Murinae</taxon>
        <taxon>Mus</taxon>
        <taxon>Mus</taxon>
    </lineage>
</organism>
<comment type="function">
    <text evidence="1 6 8 9 10 11 12">Phosphatidylserine receptor that plays an important functional role in regulatory B-cells homeostasis including generation, expansion and suppressor functions (PubMed:21821911, PubMed:25645598, PubMed:32668241). As P-selectin/SELPLG ligand, plays a specialized role in activated but not naive T-cell trafficking during inflammatory responses (PubMed:24703780). Controls thereby T-cell accumulation in the inflamed central nervous system (CNS) and the induction of autoimmune disease (PubMed:24703780). Also regulates expression of various anti-inflammatory cytokines and co-inhibitory ligands including IL10 (PubMed:25582854, PubMed:25645598). Acts as a regulator of T-cell proliferation (PubMed:15793576). May play a role in kidney injury and repair (By similarity).</text>
</comment>
<comment type="subunit">
    <text evidence="1 9">Interacts with STAM (By similarity). Interacts with SELPLG (PubMed:24703780).</text>
</comment>
<comment type="interaction">
    <interactant intactId="EBI-20217708">
        <id>Q5QNS5</id>
    </interactant>
    <interactant intactId="EBI-16764486">
        <id>Q6U7R4</id>
        <label>Timd4</label>
    </interactant>
    <organismsDiffer>false</organismsDiffer>
    <experiments>4</experiments>
</comment>
<comment type="interaction">
    <interactant intactId="EBI-20217763">
        <id>Q5QNS5-2</id>
    </interactant>
    <interactant intactId="EBI-16764486">
        <id>Q6U7R4</id>
        <label>Timd4</label>
    </interactant>
    <organismsDiffer>false</organismsDiffer>
    <experiments>2</experiments>
</comment>
<comment type="subcellular location">
    <subcellularLocation>
        <location evidence="1">Cell membrane</location>
        <topology evidence="15">Single-pass type I membrane protein</topology>
    </subcellularLocation>
</comment>
<comment type="alternative products">
    <event type="alternative splicing"/>
    <isoform>
        <id>Q5QNS5-1</id>
        <name>1</name>
        <sequence type="displayed"/>
    </isoform>
    <isoform>
        <id>Q5QNS5-2</id>
        <name>2</name>
        <sequence type="described" ref="VSP_015224"/>
    </isoform>
</comment>
<comment type="tissue specificity">
    <text evidence="5 8">Expressed by stimulated T-cells. Expressed during primary antigen stimulation (PubMed:11725301). Expressed at higher levels on B rather than T-cells, both constitutively and after activation (PubMed:21821911).</text>
</comment>
<comment type="domain">
    <text evidence="11">Possesses an immunoglobulin V-like domxain, a mucin domain, a single transmembrane region, and a cytoplasmic tail containing a tyrosine phosphorylation motif.</text>
</comment>
<comment type="polymorphism">
    <text evidence="5">Highly polymorphic. Depending on the alleles, expression is associated with an increase and early (BALB/c allele) or decrease (HBA allele) of T-helper type 2 cytokine expression. Associated with asthma susceptibility.</text>
</comment>
<comment type="disruption phenotype">
    <text evidence="10 11 12">Mutant show progressive loss of IL10 production in B-cells and with age develop severe multiorgan tissue inflammation (PubMed:25582854). Mucin-domain deletion mice exhibit decreased phosphatidylserine binding and are also unable to produce IL10 in response to apoptotic cells (PubMed:25645598). Specific deletion on B-cells results in spontaneous systemic autoimmunity (PubMed:32668241).</text>
</comment>
<comment type="miscellaneous">
    <text>Belongs to the T-cell and airway phenotype regulator (Tapr) locus, a single chromosomal region that confers reduced T-helper type 2 responsiveness and protects against airway hyperactivity (AHR), the hallmark of human asthma.</text>
</comment>
<comment type="similarity">
    <text evidence="15">Belongs to the immunoglobulin superfamily. TIM family.</text>
</comment>
<proteinExistence type="evidence at protein level"/>
<keyword id="KW-0002">3D-structure</keyword>
<keyword id="KW-0025">Alternative splicing</keyword>
<keyword id="KW-1003">Cell membrane</keyword>
<keyword id="KW-1015">Disulfide bond</keyword>
<keyword id="KW-0325">Glycoprotein</keyword>
<keyword id="KW-0393">Immunoglobulin domain</keyword>
<keyword id="KW-0472">Membrane</keyword>
<keyword id="KW-1185">Reference proteome</keyword>
<keyword id="KW-0732">Signal</keyword>
<keyword id="KW-0812">Transmembrane</keyword>
<keyword id="KW-1133">Transmembrane helix</keyword>
<reference key="1">
    <citation type="journal article" date="2001" name="Nat. Immunol.">
        <title>Identification of Tapr (an airway hyperreactivity regulatory locus) and the linked Tim gene family.</title>
        <authorList>
            <person name="McIntire J.J."/>
            <person name="Umetsu S.E."/>
            <person name="Akbari O."/>
            <person name="Potter M."/>
            <person name="Kuchroo V.K."/>
            <person name="Barsh G.S."/>
            <person name="Freeman G.J."/>
            <person name="Umetsu D.T."/>
            <person name="DeKruyff R.H."/>
        </authorList>
    </citation>
    <scope>NUCLEOTIDE SEQUENCE [MRNA] (ISOFORMS 1 AND 2)</scope>
    <scope>POLYMORPHISM</scope>
    <scope>VARIANTS HBA</scope>
    <scope>TISSUE SPECIFICITY</scope>
    <source>
        <strain>BALB/cJ</strain>
        <tissue>Spleen</tissue>
    </source>
</reference>
<reference key="2">
    <citation type="journal article" date="2009" name="PLoS Biol.">
        <title>Lineage-specific biology revealed by a finished genome assembly of the mouse.</title>
        <authorList>
            <person name="Church D.M."/>
            <person name="Goodstadt L."/>
            <person name="Hillier L.W."/>
            <person name="Zody M.C."/>
            <person name="Goldstein S."/>
            <person name="She X."/>
            <person name="Bult C.J."/>
            <person name="Agarwala R."/>
            <person name="Cherry J.L."/>
            <person name="DiCuccio M."/>
            <person name="Hlavina W."/>
            <person name="Kapustin Y."/>
            <person name="Meric P."/>
            <person name="Maglott D."/>
            <person name="Birtle Z."/>
            <person name="Marques A.C."/>
            <person name="Graves T."/>
            <person name="Zhou S."/>
            <person name="Teague B."/>
            <person name="Potamousis K."/>
            <person name="Churas C."/>
            <person name="Place M."/>
            <person name="Herschleb J."/>
            <person name="Runnheim R."/>
            <person name="Forrest D."/>
            <person name="Amos-Landgraf J."/>
            <person name="Schwartz D.C."/>
            <person name="Cheng Z."/>
            <person name="Lindblad-Toh K."/>
            <person name="Eichler E.E."/>
            <person name="Ponting C.P."/>
        </authorList>
    </citation>
    <scope>NUCLEOTIDE SEQUENCE [LARGE SCALE GENOMIC DNA]</scope>
    <source>
        <strain>C57BL/6J</strain>
    </source>
</reference>
<reference key="3">
    <citation type="journal article" date="2004" name="Genome Res.">
        <title>The status, quality, and expansion of the NIH full-length cDNA project: the Mammalian Gene Collection (MGC).</title>
        <authorList>
            <consortium name="The MGC Project Team"/>
        </authorList>
    </citation>
    <scope>NUCLEOTIDE SEQUENCE [LARGE SCALE MRNA] (ISOFORM 2)</scope>
    <source>
        <strain>C57BL/6J</strain>
        <tissue>Blastocyst</tissue>
    </source>
</reference>
<reference key="4">
    <citation type="journal article" date="2005" name="Nat. Immunol.">
        <title>TIM-4 is the ligand for TIM-1, and the TIM-1-TIM-4 interaction regulates T cell proliferation.</title>
        <authorList>
            <person name="Meyers J.H."/>
            <person name="Chakravarti S."/>
            <person name="Schlesinger D."/>
            <person name="Illes Z."/>
            <person name="Waldner H."/>
            <person name="Umetsu S.E."/>
            <person name="Kenny J."/>
            <person name="Zheng X.X."/>
            <person name="Umetsu D.T."/>
            <person name="DeKruyff R.H."/>
            <person name="Strom T.B."/>
            <person name="Kuchroo V.K."/>
        </authorList>
    </citation>
    <scope>FUNCTION</scope>
</reference>
<reference key="5">
    <citation type="journal article" date="2011" name="J. Clin. Invest.">
        <title>Regulatory B cells are identified by expression of TIM-1 and can be induced through TIM-1 ligation to promote tolerance in mice.</title>
        <authorList>
            <person name="Ding Q."/>
            <person name="Yeung M."/>
            <person name="Camirand G."/>
            <person name="Zeng Q."/>
            <person name="Akiba H."/>
            <person name="Yagita H."/>
            <person name="Chalasani G."/>
            <person name="Sayegh M.H."/>
            <person name="Najafian N."/>
            <person name="Rothstein D.M."/>
        </authorList>
    </citation>
    <scope>FUNCTION</scope>
    <scope>TISSUE SPECIFICITY</scope>
</reference>
<reference key="6">
    <citation type="journal article" date="2014" name="Immunity">
        <title>TIM-1 glycoprotein binds the adhesion receptor P-selectin and mediates T cell trafficking during inflammation and autoimmunity.</title>
        <authorList>
            <person name="Angiari S."/>
            <person name="Donnarumma T."/>
            <person name="Rossi B."/>
            <person name="Dusi S."/>
            <person name="Pietronigro E."/>
            <person name="Zenaro E."/>
            <person name="Della Bianca V."/>
            <person name="Toffali L."/>
            <person name="Piacentino G."/>
            <person name="Budui S."/>
            <person name="Rennert P."/>
            <person name="Xiao S."/>
            <person name="Laudanna C."/>
            <person name="Casasnovas J.M."/>
            <person name="Kuchroo V.K."/>
            <person name="Constantin G."/>
        </authorList>
    </citation>
    <scope>FUNCTION</scope>
    <scope>INTERACTION WITH SELPLG</scope>
</reference>
<reference key="7">
    <citation type="journal article" date="2015" name="J. Immunol.">
        <title>Tim-1 is essential for induction and maintenance of IL-10 in regulatory B cells and their regulation of tissue inflammation.</title>
        <authorList>
            <person name="Xiao S."/>
            <person name="Brooks C.R."/>
            <person name="Sobel R.A."/>
            <person name="Kuchroo V.K."/>
        </authorList>
    </citation>
    <scope>FUNCTION</scope>
    <scope>DISRUPTION PHENOTYPE</scope>
</reference>
<reference key="8">
    <citation type="journal article" date="2015" name="Am. J. Transplant.">
        <title>TIM-1 signaling is required for maintenance and induction of regulatory B cells.</title>
        <authorList>
            <person name="Yeung M.Y."/>
            <person name="Ding Q."/>
            <person name="Brooks C.R."/>
            <person name="Xiao S."/>
            <person name="Workman C.J."/>
            <person name="Vignali D.A."/>
            <person name="Ueno T."/>
            <person name="Padera R.F."/>
            <person name="Kuchroo V.K."/>
            <person name="Najafian N."/>
            <person name="Rothstein D.M."/>
        </authorList>
    </citation>
    <scope>FUNCTION</scope>
    <scope>DISRUPTION PHENOTYPE</scope>
</reference>
<reference key="9">
    <citation type="journal article" date="2020" name="Cell Rep.">
        <title>Checkpoint Receptor TIGIT Expressed on Tim-1+ B Cells Regulates Tissue Inflammation.</title>
        <authorList>
            <person name="Xiao S."/>
            <person name="Bod L."/>
            <person name="Pochet N."/>
            <person name="Kota S.B."/>
            <person name="Hu D."/>
            <person name="Madi A."/>
            <person name="Kilpatrick J."/>
            <person name="Shi J."/>
            <person name="Ho A."/>
            <person name="Zhang H."/>
            <person name="Sobel R."/>
            <person name="Weiner H.L."/>
            <person name="Strom T.B."/>
            <person name="Quintana F.J."/>
            <person name="Joller N."/>
            <person name="Kuchroo V.K."/>
        </authorList>
    </citation>
    <scope>FUNCTION</scope>
    <scope>DISRUPTION PHENOTYPE</scope>
</reference>
<reference key="10">
    <citation type="journal article" date="2007" name="Immunity">
        <title>Structures of T Cell immunoglobulin mucin receptors 1 and 2 reveal mechanisms for regulation of immune responses by the TIM receptor family.</title>
        <authorList>
            <person name="Santiago C."/>
            <person name="Ballesteros A."/>
            <person name="Tami C."/>
            <person name="Martinez-Munoz L."/>
            <person name="Kaplan G.G."/>
            <person name="Casasnovas J.M."/>
        </authorList>
    </citation>
    <scope>X-RAY CRYSTALLOGRAPHY (2.50 ANGSTROMS) OF 20-130</scope>
    <scope>DISULFIDE BONDS</scope>
</reference>
<protein>
    <recommendedName>
        <fullName>Hepatitis A virus cellular receptor 1 homolog</fullName>
        <shortName>HAVcr-1</shortName>
    </recommendedName>
    <alternativeName>
        <fullName>Kidney injury molecule 1</fullName>
        <shortName>KIM-1</shortName>
    </alternativeName>
    <alternativeName>
        <fullName>T cell immunoglobulin and mucin domain-containing protein 1</fullName>
        <shortName>TIMD-1</shortName>
    </alternativeName>
    <alternativeName>
        <fullName>T cell membrane protein 1</fullName>
    </alternativeName>
    <alternativeName>
        <fullName>T-cell immunoglobulin mucin receptor 1</fullName>
        <shortName>TIM-1</shortName>
    </alternativeName>
    <cdAntigenName>CD365</cdAntigenName>
</protein>
<name>HAVR1_MOUSE</name>
<accession>Q5QNS5</accession>
<accession>Q7TPU2</accession>
<accession>Q8VIM1</accession>
<accession>Q8VIM2</accession>
<sequence>MNQIQVFISGLILLLPGAVDSYVEVKGVVGHPVTLPCTYSTYRGITTTCWGRGQCPSSACQNTLIWTNGHRVTYQKSSRYNLKGHISEGDVSLTIENSVESDSGLYCCRVEIPGWFNDQKVTFSLQVKPEIPTRPPTRPTTTRPTATGRPTTISTRSTHVPTSIRVSTSTPPTSTHTWTHKPEPTTFCPHETTAEVTGIPSHTPTDWNGTVTSSGDTWSNHTEAIPPGKPQKNPTKGFYVGICIAALLLLLLVSTVAITRYILMKRKSASLSVVAFRVSKIEALQNAAVVHSRAEDNIYIVEDRP</sequence>
<gene>
    <name type="primary">Havcr1</name>
    <name type="synonym">Kim1</name>
    <name type="synonym">Tim1</name>
    <name type="synonym">Timd1</name>
</gene>
<evidence type="ECO:0000250" key="1">
    <source>
        <dbReference type="UniProtKB" id="Q96D42"/>
    </source>
</evidence>
<evidence type="ECO:0000255" key="2"/>
<evidence type="ECO:0000255" key="3">
    <source>
        <dbReference type="PROSITE-ProRule" id="PRU00114"/>
    </source>
</evidence>
<evidence type="ECO:0000256" key="4">
    <source>
        <dbReference type="SAM" id="MobiDB-lite"/>
    </source>
</evidence>
<evidence type="ECO:0000269" key="5">
    <source>
    </source>
</evidence>
<evidence type="ECO:0000269" key="6">
    <source>
    </source>
</evidence>
<evidence type="ECO:0000269" key="7">
    <source>
    </source>
</evidence>
<evidence type="ECO:0000269" key="8">
    <source>
    </source>
</evidence>
<evidence type="ECO:0000269" key="9">
    <source>
    </source>
</evidence>
<evidence type="ECO:0000269" key="10">
    <source>
    </source>
</evidence>
<evidence type="ECO:0000269" key="11">
    <source>
    </source>
</evidence>
<evidence type="ECO:0000269" key="12">
    <source>
    </source>
</evidence>
<evidence type="ECO:0000303" key="13">
    <source>
    </source>
</evidence>
<evidence type="ECO:0000303" key="14">
    <source>
    </source>
</evidence>
<evidence type="ECO:0000305" key="15"/>
<evidence type="ECO:0007744" key="16">
    <source>
        <dbReference type="PDB" id="2OR8"/>
    </source>
</evidence>
<evidence type="ECO:0007829" key="17">
    <source>
        <dbReference type="PDB" id="2OR8"/>
    </source>
</evidence>
<dbReference type="EMBL" id="AF399829">
    <property type="protein sequence ID" value="AAL35774.1"/>
    <property type="molecule type" value="mRNA"/>
</dbReference>
<dbReference type="EMBL" id="AF399830">
    <property type="protein sequence ID" value="AAL35775.1"/>
    <property type="molecule type" value="mRNA"/>
</dbReference>
<dbReference type="EMBL" id="AL669892">
    <property type="status" value="NOT_ANNOTATED_CDS"/>
    <property type="molecule type" value="Genomic_DNA"/>
</dbReference>
<dbReference type="EMBL" id="BC053400">
    <property type="protein sequence ID" value="AAH53400.1"/>
    <property type="molecule type" value="mRNA"/>
</dbReference>
<dbReference type="CCDS" id="CCDS24583.1">
    <molecule id="Q5QNS5-1"/>
</dbReference>
<dbReference type="CCDS" id="CCDS48778.1">
    <molecule id="Q5QNS5-2"/>
</dbReference>
<dbReference type="RefSeq" id="NP_001160103.1">
    <property type="nucleotide sequence ID" value="NM_001166631.1"/>
</dbReference>
<dbReference type="RefSeq" id="NP_001160104.1">
    <property type="nucleotide sequence ID" value="NM_001166632.1"/>
</dbReference>
<dbReference type="RefSeq" id="NP_599009.2">
    <property type="nucleotide sequence ID" value="NM_134248.2"/>
</dbReference>
<dbReference type="PDB" id="2OR8">
    <property type="method" value="X-ray"/>
    <property type="resolution" value="2.50 A"/>
    <property type="chains" value="A/B=20-130"/>
</dbReference>
<dbReference type="PDBsum" id="2OR8"/>
<dbReference type="SMR" id="Q5QNS5"/>
<dbReference type="FunCoup" id="Q5QNS5">
    <property type="interactions" value="529"/>
</dbReference>
<dbReference type="IntAct" id="Q5QNS5">
    <property type="interactions" value="1"/>
</dbReference>
<dbReference type="STRING" id="10090.ENSMUSP00000043827"/>
<dbReference type="GlyCosmos" id="Q5QNS5">
    <property type="glycosylation" value="1 site, No reported glycans"/>
</dbReference>
<dbReference type="GlyGen" id="Q5QNS5">
    <property type="glycosylation" value="1 site"/>
</dbReference>
<dbReference type="iPTMnet" id="Q5QNS5"/>
<dbReference type="PhosphoSitePlus" id="Q5QNS5"/>
<dbReference type="PaxDb" id="10090-ENSMUSP00000043827"/>
<dbReference type="ABCD" id="Q5QNS5">
    <property type="antibodies" value="21 sequenced antibodies"/>
</dbReference>
<dbReference type="DNASU" id="171283"/>
<dbReference type="GeneID" id="171283"/>
<dbReference type="KEGG" id="mmu:171283"/>
<dbReference type="AGR" id="MGI:2159680"/>
<dbReference type="CTD" id="26762"/>
<dbReference type="MGI" id="MGI:2159680">
    <property type="gene designation" value="Havcr1"/>
</dbReference>
<dbReference type="eggNOG" id="ENOG502S454">
    <property type="taxonomic scope" value="Eukaryota"/>
</dbReference>
<dbReference type="InParanoid" id="Q5QNS5"/>
<dbReference type="OrthoDB" id="8447307at2759"/>
<dbReference type="PhylomeDB" id="Q5QNS5"/>
<dbReference type="TreeFam" id="TF336163"/>
<dbReference type="BioGRID-ORCS" id="171283">
    <property type="hits" value="3 hits in 78 CRISPR screens"/>
</dbReference>
<dbReference type="ChiTaRS" id="Havcr1">
    <property type="organism name" value="mouse"/>
</dbReference>
<dbReference type="EvolutionaryTrace" id="Q5QNS5"/>
<dbReference type="PRO" id="PR:Q5QNS5"/>
<dbReference type="Proteomes" id="UP000000589">
    <property type="component" value="Unplaced"/>
</dbReference>
<dbReference type="RNAct" id="Q5QNS5">
    <property type="molecule type" value="protein"/>
</dbReference>
<dbReference type="GO" id="GO:0005903">
    <property type="term" value="C:brush border"/>
    <property type="evidence" value="ECO:0000314"/>
    <property type="project" value="MGI"/>
</dbReference>
<dbReference type="GO" id="GO:0009986">
    <property type="term" value="C:cell surface"/>
    <property type="evidence" value="ECO:0000314"/>
    <property type="project" value="MGI"/>
</dbReference>
<dbReference type="GO" id="GO:0005886">
    <property type="term" value="C:plasma membrane"/>
    <property type="evidence" value="ECO:0007669"/>
    <property type="project" value="UniProtKB-SubCell"/>
</dbReference>
<dbReference type="GO" id="GO:0001786">
    <property type="term" value="F:phosphatidylserine binding"/>
    <property type="evidence" value="ECO:0000314"/>
    <property type="project" value="MGI"/>
</dbReference>
<dbReference type="GO" id="GO:0033005">
    <property type="term" value="P:positive regulation of mast cell activation"/>
    <property type="evidence" value="ECO:0000314"/>
    <property type="project" value="MGI"/>
</dbReference>
<dbReference type="GO" id="GO:0032496">
    <property type="term" value="P:response to lipopolysaccharide"/>
    <property type="evidence" value="ECO:0000314"/>
    <property type="project" value="MGI"/>
</dbReference>
<dbReference type="GO" id="GO:0009611">
    <property type="term" value="P:response to wounding"/>
    <property type="evidence" value="ECO:0000315"/>
    <property type="project" value="MGI"/>
</dbReference>
<dbReference type="CDD" id="cd20982">
    <property type="entry name" value="IgV_TIM-3_like"/>
    <property type="match status" value="1"/>
</dbReference>
<dbReference type="FunFam" id="2.60.40.10:FF:000774">
    <property type="entry name" value="Hepatitis A virus cellular receptor 1"/>
    <property type="match status" value="1"/>
</dbReference>
<dbReference type="Gene3D" id="2.60.40.10">
    <property type="entry name" value="Immunoglobulins"/>
    <property type="match status" value="1"/>
</dbReference>
<dbReference type="InterPro" id="IPR007110">
    <property type="entry name" value="Ig-like_dom"/>
</dbReference>
<dbReference type="InterPro" id="IPR036179">
    <property type="entry name" value="Ig-like_dom_sf"/>
</dbReference>
<dbReference type="InterPro" id="IPR013783">
    <property type="entry name" value="Ig-like_fold"/>
</dbReference>
<dbReference type="InterPro" id="IPR003599">
    <property type="entry name" value="Ig_sub"/>
</dbReference>
<dbReference type="InterPro" id="IPR013106">
    <property type="entry name" value="Ig_V-set"/>
</dbReference>
<dbReference type="InterPro" id="IPR052331">
    <property type="entry name" value="TIM_domain-containing_protein"/>
</dbReference>
<dbReference type="PANTHER" id="PTHR47009">
    <property type="entry name" value="HEPATITIS A VIRUS CELLULAR RECEPTOR 1 HOMOLOG"/>
    <property type="match status" value="1"/>
</dbReference>
<dbReference type="PANTHER" id="PTHR47009:SF8">
    <property type="entry name" value="HEPATITIS A VIRUS CELLULAR RECEPTOR 1 HOMOLOG"/>
    <property type="match status" value="1"/>
</dbReference>
<dbReference type="Pfam" id="PF07686">
    <property type="entry name" value="V-set"/>
    <property type="match status" value="1"/>
</dbReference>
<dbReference type="SMART" id="SM00409">
    <property type="entry name" value="IG"/>
    <property type="match status" value="1"/>
</dbReference>
<dbReference type="SUPFAM" id="SSF48726">
    <property type="entry name" value="Immunoglobulin"/>
    <property type="match status" value="1"/>
</dbReference>
<dbReference type="PROSITE" id="PS50835">
    <property type="entry name" value="IG_LIKE"/>
    <property type="match status" value="1"/>
</dbReference>